<name>RS20_PORGI</name>
<sequence>MANHISSEKRIRQTNARRLHNRYYARTARNAVKAFRALTDRTEAEKKYPVLASMLDRLAGKNIIHKNKAANLKSKLARRINTLA</sequence>
<gene>
    <name evidence="1" type="primary">rpsT</name>
    <name type="ordered locus">PG_1723</name>
</gene>
<accession>Q7MU43</accession>
<dbReference type="EMBL" id="AE015924">
    <property type="protein sequence ID" value="AAQ66730.1"/>
    <property type="molecule type" value="Genomic_DNA"/>
</dbReference>
<dbReference type="RefSeq" id="WP_005874497.1">
    <property type="nucleotide sequence ID" value="NC_002950.2"/>
</dbReference>
<dbReference type="SMR" id="Q7MU43"/>
<dbReference type="STRING" id="242619.PG_1723"/>
<dbReference type="EnsemblBacteria" id="AAQ66730">
    <property type="protein sequence ID" value="AAQ66730"/>
    <property type="gene ID" value="PG_1723"/>
</dbReference>
<dbReference type="GeneID" id="29255634"/>
<dbReference type="KEGG" id="pgi:PG_1723"/>
<dbReference type="eggNOG" id="COG0268">
    <property type="taxonomic scope" value="Bacteria"/>
</dbReference>
<dbReference type="HOGENOM" id="CLU_160655_3_2_10"/>
<dbReference type="Proteomes" id="UP000000588">
    <property type="component" value="Chromosome"/>
</dbReference>
<dbReference type="GO" id="GO:0005829">
    <property type="term" value="C:cytosol"/>
    <property type="evidence" value="ECO:0007669"/>
    <property type="project" value="TreeGrafter"/>
</dbReference>
<dbReference type="GO" id="GO:0015935">
    <property type="term" value="C:small ribosomal subunit"/>
    <property type="evidence" value="ECO:0007669"/>
    <property type="project" value="TreeGrafter"/>
</dbReference>
<dbReference type="GO" id="GO:0070181">
    <property type="term" value="F:small ribosomal subunit rRNA binding"/>
    <property type="evidence" value="ECO:0007669"/>
    <property type="project" value="TreeGrafter"/>
</dbReference>
<dbReference type="GO" id="GO:0003735">
    <property type="term" value="F:structural constituent of ribosome"/>
    <property type="evidence" value="ECO:0007669"/>
    <property type="project" value="InterPro"/>
</dbReference>
<dbReference type="GO" id="GO:0006412">
    <property type="term" value="P:translation"/>
    <property type="evidence" value="ECO:0007669"/>
    <property type="project" value="UniProtKB-UniRule"/>
</dbReference>
<dbReference type="Gene3D" id="1.20.58.110">
    <property type="entry name" value="Ribosomal protein S20"/>
    <property type="match status" value="1"/>
</dbReference>
<dbReference type="HAMAP" id="MF_00500">
    <property type="entry name" value="Ribosomal_bS20"/>
    <property type="match status" value="1"/>
</dbReference>
<dbReference type="InterPro" id="IPR002583">
    <property type="entry name" value="Ribosomal_bS20"/>
</dbReference>
<dbReference type="InterPro" id="IPR036510">
    <property type="entry name" value="Ribosomal_bS20_sf"/>
</dbReference>
<dbReference type="NCBIfam" id="TIGR00029">
    <property type="entry name" value="S20"/>
    <property type="match status" value="1"/>
</dbReference>
<dbReference type="PANTHER" id="PTHR33398">
    <property type="entry name" value="30S RIBOSOMAL PROTEIN S20"/>
    <property type="match status" value="1"/>
</dbReference>
<dbReference type="PANTHER" id="PTHR33398:SF1">
    <property type="entry name" value="SMALL RIBOSOMAL SUBUNIT PROTEIN BS20C"/>
    <property type="match status" value="1"/>
</dbReference>
<dbReference type="Pfam" id="PF01649">
    <property type="entry name" value="Ribosomal_S20p"/>
    <property type="match status" value="1"/>
</dbReference>
<dbReference type="SUPFAM" id="SSF46992">
    <property type="entry name" value="Ribosomal protein S20"/>
    <property type="match status" value="1"/>
</dbReference>
<feature type="chain" id="PRO_0000168008" description="Small ribosomal subunit protein bS20">
    <location>
        <begin position="1"/>
        <end position="84"/>
    </location>
</feature>
<protein>
    <recommendedName>
        <fullName evidence="1">Small ribosomal subunit protein bS20</fullName>
    </recommendedName>
    <alternativeName>
        <fullName evidence="2">30S ribosomal protein S20</fullName>
    </alternativeName>
</protein>
<keyword id="KW-1185">Reference proteome</keyword>
<keyword id="KW-0687">Ribonucleoprotein</keyword>
<keyword id="KW-0689">Ribosomal protein</keyword>
<keyword id="KW-0694">RNA-binding</keyword>
<keyword id="KW-0699">rRNA-binding</keyword>
<organism>
    <name type="scientific">Porphyromonas gingivalis (strain ATCC BAA-308 / W83)</name>
    <dbReference type="NCBI Taxonomy" id="242619"/>
    <lineage>
        <taxon>Bacteria</taxon>
        <taxon>Pseudomonadati</taxon>
        <taxon>Bacteroidota</taxon>
        <taxon>Bacteroidia</taxon>
        <taxon>Bacteroidales</taxon>
        <taxon>Porphyromonadaceae</taxon>
        <taxon>Porphyromonas</taxon>
    </lineage>
</organism>
<evidence type="ECO:0000255" key="1">
    <source>
        <dbReference type="HAMAP-Rule" id="MF_00500"/>
    </source>
</evidence>
<evidence type="ECO:0000305" key="2"/>
<comment type="function">
    <text evidence="1">Binds directly to 16S ribosomal RNA.</text>
</comment>
<comment type="similarity">
    <text evidence="1">Belongs to the bacterial ribosomal protein bS20 family.</text>
</comment>
<reference key="1">
    <citation type="journal article" date="2003" name="J. Bacteriol.">
        <title>Complete genome sequence of the oral pathogenic bacterium Porphyromonas gingivalis strain W83.</title>
        <authorList>
            <person name="Nelson K.E."/>
            <person name="Fleischmann R.D."/>
            <person name="DeBoy R.T."/>
            <person name="Paulsen I.T."/>
            <person name="Fouts D.E."/>
            <person name="Eisen J.A."/>
            <person name="Daugherty S.C."/>
            <person name="Dodson R.J."/>
            <person name="Durkin A.S."/>
            <person name="Gwinn M.L."/>
            <person name="Haft D.H."/>
            <person name="Kolonay J.F."/>
            <person name="Nelson W.C."/>
            <person name="Mason T.M."/>
            <person name="Tallon L."/>
            <person name="Gray J."/>
            <person name="Granger D."/>
            <person name="Tettelin H."/>
            <person name="Dong H."/>
            <person name="Galvin J.L."/>
            <person name="Duncan M.J."/>
            <person name="Dewhirst F.E."/>
            <person name="Fraser C.M."/>
        </authorList>
    </citation>
    <scope>NUCLEOTIDE SEQUENCE [LARGE SCALE GENOMIC DNA]</scope>
    <source>
        <strain>ATCC BAA-308 / W83</strain>
    </source>
</reference>
<proteinExistence type="inferred from homology"/>